<feature type="chain" id="PRO_1000022395" description="Pyridoxine 5'-phosphate synthase">
    <location>
        <begin position="1"/>
        <end position="248"/>
    </location>
</feature>
<feature type="active site" description="Proton acceptor" evidence="1">
    <location>
        <position position="48"/>
    </location>
</feature>
<feature type="active site" description="Proton acceptor" evidence="1">
    <location>
        <position position="75"/>
    </location>
</feature>
<feature type="active site" description="Proton donor" evidence="1">
    <location>
        <position position="196"/>
    </location>
</feature>
<feature type="binding site" evidence="1">
    <location>
        <position position="12"/>
    </location>
    <ligand>
        <name>3-amino-2-oxopropyl phosphate</name>
        <dbReference type="ChEBI" id="CHEBI:57279"/>
    </ligand>
</feature>
<feature type="binding site" evidence="1">
    <location>
        <begin position="14"/>
        <end position="15"/>
    </location>
    <ligand>
        <name>1-deoxy-D-xylulose 5-phosphate</name>
        <dbReference type="ChEBI" id="CHEBI:57792"/>
    </ligand>
</feature>
<feature type="binding site" evidence="1">
    <location>
        <position position="23"/>
    </location>
    <ligand>
        <name>3-amino-2-oxopropyl phosphate</name>
        <dbReference type="ChEBI" id="CHEBI:57279"/>
    </ligand>
</feature>
<feature type="binding site" evidence="1">
    <location>
        <position position="50"/>
    </location>
    <ligand>
        <name>1-deoxy-D-xylulose 5-phosphate</name>
        <dbReference type="ChEBI" id="CHEBI:57792"/>
    </ligand>
</feature>
<feature type="binding site" evidence="1">
    <location>
        <position position="55"/>
    </location>
    <ligand>
        <name>1-deoxy-D-xylulose 5-phosphate</name>
        <dbReference type="ChEBI" id="CHEBI:57792"/>
    </ligand>
</feature>
<feature type="binding site" evidence="1">
    <location>
        <position position="105"/>
    </location>
    <ligand>
        <name>1-deoxy-D-xylulose 5-phosphate</name>
        <dbReference type="ChEBI" id="CHEBI:57792"/>
    </ligand>
</feature>
<feature type="binding site" evidence="1">
    <location>
        <position position="197"/>
    </location>
    <ligand>
        <name>3-amino-2-oxopropyl phosphate</name>
        <dbReference type="ChEBI" id="CHEBI:57279"/>
    </ligand>
</feature>
<feature type="binding site" evidence="1">
    <location>
        <begin position="218"/>
        <end position="219"/>
    </location>
    <ligand>
        <name>3-amino-2-oxopropyl phosphate</name>
        <dbReference type="ChEBI" id="CHEBI:57279"/>
    </ligand>
</feature>
<feature type="site" description="Transition state stabilizer" evidence="1">
    <location>
        <position position="156"/>
    </location>
</feature>
<organism>
    <name type="scientific">Stutzerimonas stutzeri (strain A1501)</name>
    <name type="common">Pseudomonas stutzeri</name>
    <dbReference type="NCBI Taxonomy" id="379731"/>
    <lineage>
        <taxon>Bacteria</taxon>
        <taxon>Pseudomonadati</taxon>
        <taxon>Pseudomonadota</taxon>
        <taxon>Gammaproteobacteria</taxon>
        <taxon>Pseudomonadales</taxon>
        <taxon>Pseudomonadaceae</taxon>
        <taxon>Stutzerimonas</taxon>
    </lineage>
</organism>
<evidence type="ECO:0000255" key="1">
    <source>
        <dbReference type="HAMAP-Rule" id="MF_00279"/>
    </source>
</evidence>
<reference key="1">
    <citation type="journal article" date="2008" name="Proc. Natl. Acad. Sci. U.S.A.">
        <title>Nitrogen fixation island and rhizosphere competence traits in the genome of root-associated Pseudomonas stutzeri A1501.</title>
        <authorList>
            <person name="Yan Y."/>
            <person name="Yang J."/>
            <person name="Dou Y."/>
            <person name="Chen M."/>
            <person name="Ping S."/>
            <person name="Peng J."/>
            <person name="Lu W."/>
            <person name="Zhang W."/>
            <person name="Yao Z."/>
            <person name="Li H."/>
            <person name="Liu W."/>
            <person name="He S."/>
            <person name="Geng L."/>
            <person name="Zhang X."/>
            <person name="Yang F."/>
            <person name="Yu H."/>
            <person name="Zhan Y."/>
            <person name="Li D."/>
            <person name="Lin Z."/>
            <person name="Wang Y."/>
            <person name="Elmerich C."/>
            <person name="Lin M."/>
            <person name="Jin Q."/>
        </authorList>
    </citation>
    <scope>NUCLEOTIDE SEQUENCE [LARGE SCALE GENOMIC DNA]</scope>
    <source>
        <strain>A1501</strain>
    </source>
</reference>
<name>PDXJ_STUS1</name>
<protein>
    <recommendedName>
        <fullName evidence="1">Pyridoxine 5'-phosphate synthase</fullName>
        <shortName evidence="1">PNP synthase</shortName>
        <ecNumber evidence="1">2.6.99.2</ecNumber>
    </recommendedName>
</protein>
<sequence length="248" mass="26972">MTEANRILLGVNVDHVATLRQARGTRYPDPVKAALDAEEAGADGITVHLREDRRHIQERDVLMMKDALQTRMNFEMGVTEAMLAFAEQLRPEHVCLVPETRQELTTEGGLDVAGQEARIREAVERLRGCGAEVSLFIDADPRQIEAAARVGAPAIELHTGRYADAHSVAERACELARIRDGVEVGLSHGLIVNAGHGLHYHNAEAIAAIRGVNELNIGHAIVAHALFVGFKQAVKEMKHLILSAAARG</sequence>
<comment type="function">
    <text evidence="1">Catalyzes the complicated ring closure reaction between the two acyclic compounds 1-deoxy-D-xylulose-5-phosphate (DXP) and 3-amino-2-oxopropyl phosphate (1-amino-acetone-3-phosphate or AAP) to form pyridoxine 5'-phosphate (PNP) and inorganic phosphate.</text>
</comment>
<comment type="catalytic activity">
    <reaction evidence="1">
        <text>3-amino-2-oxopropyl phosphate + 1-deoxy-D-xylulose 5-phosphate = pyridoxine 5'-phosphate + phosphate + 2 H2O + H(+)</text>
        <dbReference type="Rhea" id="RHEA:15265"/>
        <dbReference type="ChEBI" id="CHEBI:15377"/>
        <dbReference type="ChEBI" id="CHEBI:15378"/>
        <dbReference type="ChEBI" id="CHEBI:43474"/>
        <dbReference type="ChEBI" id="CHEBI:57279"/>
        <dbReference type="ChEBI" id="CHEBI:57792"/>
        <dbReference type="ChEBI" id="CHEBI:58589"/>
        <dbReference type="EC" id="2.6.99.2"/>
    </reaction>
</comment>
<comment type="pathway">
    <text evidence="1">Cofactor biosynthesis; pyridoxine 5'-phosphate biosynthesis; pyridoxine 5'-phosphate from D-erythrose 4-phosphate: step 5/5.</text>
</comment>
<comment type="subunit">
    <text evidence="1">Homooctamer; tetramer of dimers.</text>
</comment>
<comment type="subcellular location">
    <subcellularLocation>
        <location evidence="1">Cytoplasm</location>
    </subcellularLocation>
</comment>
<comment type="similarity">
    <text evidence="1">Belongs to the PNP synthase family.</text>
</comment>
<accession>A4VIX8</accession>
<dbReference type="EC" id="2.6.99.2" evidence="1"/>
<dbReference type="EMBL" id="CP000304">
    <property type="protein sequence ID" value="ABP78929.1"/>
    <property type="molecule type" value="Genomic_DNA"/>
</dbReference>
<dbReference type="RefSeq" id="WP_011912415.1">
    <property type="nucleotide sequence ID" value="NC_009434.1"/>
</dbReference>
<dbReference type="SMR" id="A4VIX8"/>
<dbReference type="KEGG" id="psa:PST_1234"/>
<dbReference type="eggNOG" id="COG0854">
    <property type="taxonomic scope" value="Bacteria"/>
</dbReference>
<dbReference type="HOGENOM" id="CLU_074563_0_0_6"/>
<dbReference type="UniPathway" id="UPA00244">
    <property type="reaction ID" value="UER00313"/>
</dbReference>
<dbReference type="Proteomes" id="UP000000233">
    <property type="component" value="Chromosome"/>
</dbReference>
<dbReference type="GO" id="GO:0005829">
    <property type="term" value="C:cytosol"/>
    <property type="evidence" value="ECO:0007669"/>
    <property type="project" value="TreeGrafter"/>
</dbReference>
<dbReference type="GO" id="GO:0033856">
    <property type="term" value="F:pyridoxine 5'-phosphate synthase activity"/>
    <property type="evidence" value="ECO:0007669"/>
    <property type="project" value="UniProtKB-EC"/>
</dbReference>
<dbReference type="GO" id="GO:0008615">
    <property type="term" value="P:pyridoxine biosynthetic process"/>
    <property type="evidence" value="ECO:0007669"/>
    <property type="project" value="UniProtKB-UniRule"/>
</dbReference>
<dbReference type="CDD" id="cd00003">
    <property type="entry name" value="PNPsynthase"/>
    <property type="match status" value="1"/>
</dbReference>
<dbReference type="FunFam" id="3.20.20.70:FF:000042">
    <property type="entry name" value="Pyridoxine 5'-phosphate synthase"/>
    <property type="match status" value="1"/>
</dbReference>
<dbReference type="Gene3D" id="3.20.20.70">
    <property type="entry name" value="Aldolase class I"/>
    <property type="match status" value="1"/>
</dbReference>
<dbReference type="HAMAP" id="MF_00279">
    <property type="entry name" value="PdxJ"/>
    <property type="match status" value="1"/>
</dbReference>
<dbReference type="InterPro" id="IPR013785">
    <property type="entry name" value="Aldolase_TIM"/>
</dbReference>
<dbReference type="InterPro" id="IPR004569">
    <property type="entry name" value="PyrdxlP_synth_PdxJ"/>
</dbReference>
<dbReference type="InterPro" id="IPR036130">
    <property type="entry name" value="Pyridoxine-5'_phos_synth"/>
</dbReference>
<dbReference type="NCBIfam" id="TIGR00559">
    <property type="entry name" value="pdxJ"/>
    <property type="match status" value="1"/>
</dbReference>
<dbReference type="NCBIfam" id="NF003623">
    <property type="entry name" value="PRK05265.1-1"/>
    <property type="match status" value="1"/>
</dbReference>
<dbReference type="NCBIfam" id="NF003625">
    <property type="entry name" value="PRK05265.1-3"/>
    <property type="match status" value="1"/>
</dbReference>
<dbReference type="NCBIfam" id="NF003627">
    <property type="entry name" value="PRK05265.1-5"/>
    <property type="match status" value="1"/>
</dbReference>
<dbReference type="PANTHER" id="PTHR30456">
    <property type="entry name" value="PYRIDOXINE 5'-PHOSPHATE SYNTHASE"/>
    <property type="match status" value="1"/>
</dbReference>
<dbReference type="PANTHER" id="PTHR30456:SF0">
    <property type="entry name" value="PYRIDOXINE 5'-PHOSPHATE SYNTHASE"/>
    <property type="match status" value="1"/>
</dbReference>
<dbReference type="Pfam" id="PF03740">
    <property type="entry name" value="PdxJ"/>
    <property type="match status" value="1"/>
</dbReference>
<dbReference type="SUPFAM" id="SSF63892">
    <property type="entry name" value="Pyridoxine 5'-phosphate synthase"/>
    <property type="match status" value="1"/>
</dbReference>
<proteinExistence type="inferred from homology"/>
<gene>
    <name evidence="1" type="primary">pdxJ</name>
    <name type="ordered locus">PST_1234</name>
</gene>
<keyword id="KW-0963">Cytoplasm</keyword>
<keyword id="KW-0664">Pyridoxine biosynthesis</keyword>
<keyword id="KW-1185">Reference proteome</keyword>
<keyword id="KW-0808">Transferase</keyword>